<comment type="function">
    <text evidence="1">GTPase-activating protein (GAP) for ADP ribosylation factor (ARF).</text>
</comment>
<dbReference type="EMBL" id="AB016882">
    <property type="protein sequence ID" value="BAB08919.1"/>
    <property type="molecule type" value="Genomic_DNA"/>
</dbReference>
<dbReference type="EMBL" id="CP002688">
    <property type="protein sequence ID" value="AED95421.1"/>
    <property type="molecule type" value="Genomic_DNA"/>
</dbReference>
<dbReference type="EMBL" id="AY099693">
    <property type="protein sequence ID" value="AAM20544.1"/>
    <property type="molecule type" value="mRNA"/>
</dbReference>
<dbReference type="EMBL" id="AY128872">
    <property type="protein sequence ID" value="AAM91272.1"/>
    <property type="molecule type" value="mRNA"/>
</dbReference>
<dbReference type="RefSeq" id="NP_199487.1">
    <property type="nucleotide sequence ID" value="NM_124045.5"/>
</dbReference>
<dbReference type="SMR" id="Q9FIQ0"/>
<dbReference type="BioGRID" id="19966">
    <property type="interactions" value="3"/>
</dbReference>
<dbReference type="FunCoup" id="Q9FIQ0">
    <property type="interactions" value="4048"/>
</dbReference>
<dbReference type="IntAct" id="Q9FIQ0">
    <property type="interactions" value="1"/>
</dbReference>
<dbReference type="STRING" id="3702.Q9FIQ0"/>
<dbReference type="iPTMnet" id="Q9FIQ0"/>
<dbReference type="PaxDb" id="3702-AT5G46750.1"/>
<dbReference type="ProteomicsDB" id="244743"/>
<dbReference type="EnsemblPlants" id="AT5G46750.1">
    <property type="protein sequence ID" value="AT5G46750.1"/>
    <property type="gene ID" value="AT5G46750"/>
</dbReference>
<dbReference type="GeneID" id="834718"/>
<dbReference type="Gramene" id="AT5G46750.1">
    <property type="protein sequence ID" value="AT5G46750.1"/>
    <property type="gene ID" value="AT5G46750"/>
</dbReference>
<dbReference type="KEGG" id="ath:AT5G46750"/>
<dbReference type="Araport" id="AT5G46750"/>
<dbReference type="TAIR" id="AT5G46750">
    <property type="gene designation" value="AGD9"/>
</dbReference>
<dbReference type="eggNOG" id="KOG0706">
    <property type="taxonomic scope" value="Eukaryota"/>
</dbReference>
<dbReference type="HOGENOM" id="CLU_023062_0_0_1"/>
<dbReference type="InParanoid" id="Q9FIQ0"/>
<dbReference type="OMA" id="ENGPSKV"/>
<dbReference type="PhylomeDB" id="Q9FIQ0"/>
<dbReference type="PRO" id="PR:Q9FIQ0"/>
<dbReference type="Proteomes" id="UP000006548">
    <property type="component" value="Chromosome 5"/>
</dbReference>
<dbReference type="ExpressionAtlas" id="Q9FIQ0">
    <property type="expression patterns" value="baseline and differential"/>
</dbReference>
<dbReference type="GO" id="GO:0009536">
    <property type="term" value="C:plastid"/>
    <property type="evidence" value="ECO:0007005"/>
    <property type="project" value="TAIR"/>
</dbReference>
<dbReference type="GO" id="GO:0005096">
    <property type="term" value="F:GTPase activator activity"/>
    <property type="evidence" value="ECO:0007669"/>
    <property type="project" value="UniProtKB-KW"/>
</dbReference>
<dbReference type="GO" id="GO:0008270">
    <property type="term" value="F:zinc ion binding"/>
    <property type="evidence" value="ECO:0007669"/>
    <property type="project" value="UniProtKB-KW"/>
</dbReference>
<dbReference type="CDD" id="cd08831">
    <property type="entry name" value="ArfGap_ArfGap2_3_like"/>
    <property type="match status" value="1"/>
</dbReference>
<dbReference type="FunFam" id="1.10.220.150:FF:000012">
    <property type="entry name" value="ADP-ribosylation factor GTPase-activating protein AGD10"/>
    <property type="match status" value="1"/>
</dbReference>
<dbReference type="Gene3D" id="1.10.220.150">
    <property type="entry name" value="Arf GTPase activating protein"/>
    <property type="match status" value="1"/>
</dbReference>
<dbReference type="InterPro" id="IPR037278">
    <property type="entry name" value="ARFGAP/RecO"/>
</dbReference>
<dbReference type="InterPro" id="IPR001164">
    <property type="entry name" value="ArfGAP_dom"/>
</dbReference>
<dbReference type="InterPro" id="IPR038508">
    <property type="entry name" value="ArfGAP_dom_sf"/>
</dbReference>
<dbReference type="PANTHER" id="PTHR45686:SF4">
    <property type="entry name" value="ADP-RIBOSYLATION FACTOR GTPASE ACTIVATING PROTEIN 3, ISOFORM H"/>
    <property type="match status" value="1"/>
</dbReference>
<dbReference type="PANTHER" id="PTHR45686">
    <property type="entry name" value="ADP-RIBOSYLATION FACTOR GTPASE ACTIVATING PROTEIN 3, ISOFORM H-RELATED"/>
    <property type="match status" value="1"/>
</dbReference>
<dbReference type="Pfam" id="PF01412">
    <property type="entry name" value="ArfGap"/>
    <property type="match status" value="1"/>
</dbReference>
<dbReference type="PRINTS" id="PR00405">
    <property type="entry name" value="REVINTRACTNG"/>
</dbReference>
<dbReference type="SMART" id="SM00105">
    <property type="entry name" value="ArfGap"/>
    <property type="match status" value="1"/>
</dbReference>
<dbReference type="SUPFAM" id="SSF57863">
    <property type="entry name" value="ArfGap/RecO-like zinc finger"/>
    <property type="match status" value="1"/>
</dbReference>
<dbReference type="PROSITE" id="PS50115">
    <property type="entry name" value="ARFGAP"/>
    <property type="match status" value="1"/>
</dbReference>
<organism>
    <name type="scientific">Arabidopsis thaliana</name>
    <name type="common">Mouse-ear cress</name>
    <dbReference type="NCBI Taxonomy" id="3702"/>
    <lineage>
        <taxon>Eukaryota</taxon>
        <taxon>Viridiplantae</taxon>
        <taxon>Streptophyta</taxon>
        <taxon>Embryophyta</taxon>
        <taxon>Tracheophyta</taxon>
        <taxon>Spermatophyta</taxon>
        <taxon>Magnoliopsida</taxon>
        <taxon>eudicotyledons</taxon>
        <taxon>Gunneridae</taxon>
        <taxon>Pentapetalae</taxon>
        <taxon>rosids</taxon>
        <taxon>malvids</taxon>
        <taxon>Brassicales</taxon>
        <taxon>Brassicaceae</taxon>
        <taxon>Camelineae</taxon>
        <taxon>Arabidopsis</taxon>
    </lineage>
</organism>
<feature type="initiator methionine" description="Removed" evidence="5">
    <location>
        <position position="1"/>
    </location>
</feature>
<feature type="chain" id="PRO_0000352500" description="Probable ADP-ribosylation factor GTPase-activating protein AGD9">
    <location>
        <begin position="2"/>
        <end position="402"/>
    </location>
</feature>
<feature type="domain" description="Arf-GAP" evidence="2">
    <location>
        <begin position="10"/>
        <end position="128"/>
    </location>
</feature>
<feature type="zinc finger region" description="C4-type" evidence="2">
    <location>
        <begin position="25"/>
        <end position="48"/>
    </location>
</feature>
<feature type="region of interest" description="Disordered" evidence="3">
    <location>
        <begin position="133"/>
        <end position="166"/>
    </location>
</feature>
<feature type="region of interest" description="Disordered" evidence="3">
    <location>
        <begin position="187"/>
        <end position="234"/>
    </location>
</feature>
<feature type="region of interest" description="Disordered" evidence="3">
    <location>
        <begin position="278"/>
        <end position="303"/>
    </location>
</feature>
<feature type="compositionally biased region" description="Polar residues" evidence="3">
    <location>
        <begin position="133"/>
        <end position="153"/>
    </location>
</feature>
<feature type="compositionally biased region" description="Basic and acidic residues" evidence="3">
    <location>
        <begin position="204"/>
        <end position="216"/>
    </location>
</feature>
<feature type="compositionally biased region" description="Polar residues" evidence="3">
    <location>
        <begin position="225"/>
        <end position="234"/>
    </location>
</feature>
<feature type="modified residue" description="N-acetylalanine" evidence="5">
    <location>
        <position position="2"/>
    </location>
</feature>
<feature type="modified residue" description="Phosphoserine" evidence="4">
    <location>
        <position position="307"/>
    </location>
</feature>
<proteinExistence type="evidence at protein level"/>
<accession>Q9FIQ0</accession>
<reference key="1">
    <citation type="journal article" date="1998" name="DNA Res.">
        <title>Structural analysis of Arabidopsis thaliana chromosome 5. VIII. Sequence features of the regions of 1,081,958 bp covered by seventeen physically assigned P1 and TAC clones.</title>
        <authorList>
            <person name="Asamizu E."/>
            <person name="Sato S."/>
            <person name="Kaneko T."/>
            <person name="Nakamura Y."/>
            <person name="Kotani H."/>
            <person name="Miyajima N."/>
            <person name="Tabata S."/>
        </authorList>
    </citation>
    <scope>NUCLEOTIDE SEQUENCE [LARGE SCALE GENOMIC DNA]</scope>
    <source>
        <strain>cv. Columbia</strain>
    </source>
</reference>
<reference key="2">
    <citation type="journal article" date="2017" name="Plant J.">
        <title>Araport11: a complete reannotation of the Arabidopsis thaliana reference genome.</title>
        <authorList>
            <person name="Cheng C.Y."/>
            <person name="Krishnakumar V."/>
            <person name="Chan A.P."/>
            <person name="Thibaud-Nissen F."/>
            <person name="Schobel S."/>
            <person name="Town C.D."/>
        </authorList>
    </citation>
    <scope>GENOME REANNOTATION</scope>
    <source>
        <strain>cv. Columbia</strain>
    </source>
</reference>
<reference key="3">
    <citation type="journal article" date="2003" name="Science">
        <title>Empirical analysis of transcriptional activity in the Arabidopsis genome.</title>
        <authorList>
            <person name="Yamada K."/>
            <person name="Lim J."/>
            <person name="Dale J.M."/>
            <person name="Chen H."/>
            <person name="Shinn P."/>
            <person name="Palm C.J."/>
            <person name="Southwick A.M."/>
            <person name="Wu H.C."/>
            <person name="Kim C.J."/>
            <person name="Nguyen M."/>
            <person name="Pham P.K."/>
            <person name="Cheuk R.F."/>
            <person name="Karlin-Newmann G."/>
            <person name="Liu S.X."/>
            <person name="Lam B."/>
            <person name="Sakano H."/>
            <person name="Wu T."/>
            <person name="Yu G."/>
            <person name="Miranda M."/>
            <person name="Quach H.L."/>
            <person name="Tripp M."/>
            <person name="Chang C.H."/>
            <person name="Lee J.M."/>
            <person name="Toriumi M.J."/>
            <person name="Chan M.M."/>
            <person name="Tang C.C."/>
            <person name="Onodera C.S."/>
            <person name="Deng J.M."/>
            <person name="Akiyama K."/>
            <person name="Ansari Y."/>
            <person name="Arakawa T."/>
            <person name="Banh J."/>
            <person name="Banno F."/>
            <person name="Bowser L."/>
            <person name="Brooks S.Y."/>
            <person name="Carninci P."/>
            <person name="Chao Q."/>
            <person name="Choy N."/>
            <person name="Enju A."/>
            <person name="Goldsmith A.D."/>
            <person name="Gurjal M."/>
            <person name="Hansen N.F."/>
            <person name="Hayashizaki Y."/>
            <person name="Johnson-Hopson C."/>
            <person name="Hsuan V.W."/>
            <person name="Iida K."/>
            <person name="Karnes M."/>
            <person name="Khan S."/>
            <person name="Koesema E."/>
            <person name="Ishida J."/>
            <person name="Jiang P.X."/>
            <person name="Jones T."/>
            <person name="Kawai J."/>
            <person name="Kamiya A."/>
            <person name="Meyers C."/>
            <person name="Nakajima M."/>
            <person name="Narusaka M."/>
            <person name="Seki M."/>
            <person name="Sakurai T."/>
            <person name="Satou M."/>
            <person name="Tamse R."/>
            <person name="Vaysberg M."/>
            <person name="Wallender E.K."/>
            <person name="Wong C."/>
            <person name="Yamamura Y."/>
            <person name="Yuan S."/>
            <person name="Shinozaki K."/>
            <person name="Davis R.W."/>
            <person name="Theologis A."/>
            <person name="Ecker J.R."/>
        </authorList>
    </citation>
    <scope>NUCLEOTIDE SEQUENCE [LARGE SCALE MRNA]</scope>
    <source>
        <strain>cv. Columbia</strain>
    </source>
</reference>
<reference key="4">
    <citation type="journal article" date="2003" name="Plant Physiol.">
        <title>Analysis of the small GTPase gene superfamily of Arabidopsis.</title>
        <authorList>
            <person name="Vernoud V."/>
            <person name="Horton A.C."/>
            <person name="Yang Z."/>
            <person name="Nielsen E."/>
        </authorList>
    </citation>
    <scope>GENE FAMILY</scope>
    <scope>NOMENCLATURE</scope>
</reference>
<reference key="5">
    <citation type="journal article" date="2009" name="Plant Physiol.">
        <title>Large-scale Arabidopsis phosphoproteome profiling reveals novel chloroplast kinase substrates and phosphorylation networks.</title>
        <authorList>
            <person name="Reiland S."/>
            <person name="Messerli G."/>
            <person name="Baerenfaller K."/>
            <person name="Gerrits B."/>
            <person name="Endler A."/>
            <person name="Grossmann J."/>
            <person name="Gruissem W."/>
            <person name="Baginsky S."/>
        </authorList>
    </citation>
    <scope>PHOSPHORYLATION [LARGE SCALE ANALYSIS] AT SER-307</scope>
    <scope>IDENTIFICATION BY MASS SPECTROMETRY [LARGE SCALE ANALYSIS]</scope>
</reference>
<reference key="6">
    <citation type="journal article" date="2012" name="Mol. Cell. Proteomics">
        <title>Comparative large-scale characterisation of plant vs. mammal proteins reveals similar and idiosyncratic N-alpha acetylation features.</title>
        <authorList>
            <person name="Bienvenut W.V."/>
            <person name="Sumpton D."/>
            <person name="Martinez A."/>
            <person name="Lilla S."/>
            <person name="Espagne C."/>
            <person name="Meinnel T."/>
            <person name="Giglione C."/>
        </authorList>
    </citation>
    <scope>ACETYLATION [LARGE SCALE ANALYSIS] AT ALA-2</scope>
    <scope>CLEAVAGE OF INITIATOR METHIONINE [LARGE SCALE ANALYSIS]</scope>
    <scope>IDENTIFICATION BY MASS SPECTROMETRY [LARGE SCALE ANALYSIS]</scope>
</reference>
<gene>
    <name type="primary">AGD9</name>
    <name type="ordered locus">At5g46750</name>
    <name type="ORF">MZA15.17</name>
</gene>
<name>AGD9_ARATH</name>
<protein>
    <recommendedName>
        <fullName>Probable ADP-ribosylation factor GTPase-activating protein AGD9</fullName>
        <shortName>ARF GAP AGD9</shortName>
    </recommendedName>
    <alternativeName>
        <fullName>Protein ARF-GAP DOMAIN 9</fullName>
        <shortName>AtAGD9</shortName>
    </alternativeName>
</protein>
<sequence>MATENLTDKNVVFRKLKSKSENKVCFDCSAKNPTWASVPYGIFLCIDCSAVHRSLGVHISFVRSTNLDSWSPEQLRTMMFGGNNRAQVFFKQHGWNDGGKIEAKYTSRAADMYRQTLAKEVAKAMAEETVLPSLSSVATSQPVESSENGFTSESPKESSLKQEAAVVSSPKASQKVVASTFKKPLVSRKSGKTGGLGARKLTTKSKDNLYEQKPEEPVPVIPAASPTNDTSAAGSSFASRFEYFDDEQSGGQSGTRVLSHVAPPKSSNFFNEFGMDSAFPKKSSSSSSKAQVEETDEARKKFSNAKSISSAQFFGNQNRDADLDSKATLQKFSGSAAISSSDLFGHGPDDSNIDITASDLINRISFQAQQDMSSIANLAEETKNKLGTFASSIFSDLQDRML</sequence>
<keyword id="KW-0007">Acetylation</keyword>
<keyword id="KW-0343">GTPase activation</keyword>
<keyword id="KW-0479">Metal-binding</keyword>
<keyword id="KW-0597">Phosphoprotein</keyword>
<keyword id="KW-1185">Reference proteome</keyword>
<keyword id="KW-0862">Zinc</keyword>
<keyword id="KW-0863">Zinc-finger</keyword>
<evidence type="ECO:0000250" key="1"/>
<evidence type="ECO:0000255" key="2">
    <source>
        <dbReference type="PROSITE-ProRule" id="PRU00288"/>
    </source>
</evidence>
<evidence type="ECO:0000256" key="3">
    <source>
        <dbReference type="SAM" id="MobiDB-lite"/>
    </source>
</evidence>
<evidence type="ECO:0007744" key="4">
    <source>
    </source>
</evidence>
<evidence type="ECO:0007744" key="5">
    <source>
    </source>
</evidence>